<name>HTAI2_MOUSE</name>
<dbReference type="EMBL" id="AF061972">
    <property type="protein sequence ID" value="AAC69617.1"/>
    <property type="molecule type" value="mRNA"/>
</dbReference>
<dbReference type="EMBL" id="AY151050">
    <property type="protein sequence ID" value="AAN84531.1"/>
    <property type="molecule type" value="Genomic_DNA"/>
</dbReference>
<dbReference type="EMBL" id="AK008630">
    <property type="protein sequence ID" value="BAB25792.1"/>
    <property type="molecule type" value="mRNA"/>
</dbReference>
<dbReference type="EMBL" id="AK015389">
    <property type="protein sequence ID" value="BAB29825.1"/>
    <property type="molecule type" value="mRNA"/>
</dbReference>
<dbReference type="EMBL" id="AK144837">
    <property type="protein sequence ID" value="BAE26091.1"/>
    <property type="molecule type" value="mRNA"/>
</dbReference>
<dbReference type="EMBL" id="AC124775">
    <property type="status" value="NOT_ANNOTATED_CDS"/>
    <property type="molecule type" value="Genomic_DNA"/>
</dbReference>
<dbReference type="EMBL" id="CH466603">
    <property type="protein sequence ID" value="EDL22975.1"/>
    <property type="molecule type" value="Genomic_DNA"/>
</dbReference>
<dbReference type="EMBL" id="CH466603">
    <property type="protein sequence ID" value="EDL22976.1"/>
    <property type="molecule type" value="Genomic_DNA"/>
</dbReference>
<dbReference type="EMBL" id="CH466603">
    <property type="protein sequence ID" value="EDL22977.1"/>
    <property type="molecule type" value="Genomic_DNA"/>
</dbReference>
<dbReference type="EMBL" id="BC004083">
    <property type="protein sequence ID" value="AAH04083.1"/>
    <property type="molecule type" value="mRNA"/>
</dbReference>
<dbReference type="EMBL" id="BC017372">
    <property type="protein sequence ID" value="AAH17372.1"/>
    <property type="molecule type" value="mRNA"/>
</dbReference>
<dbReference type="CCDS" id="CCDS52260.1">
    <molecule id="Q9Z2G9-1"/>
</dbReference>
<dbReference type="RefSeq" id="NP_001139521.1">
    <molecule id="Q9Z2G9-1"/>
    <property type="nucleotide sequence ID" value="NM_001146049.1"/>
</dbReference>
<dbReference type="RefSeq" id="NP_001139522.1">
    <molecule id="Q9Z2G9-1"/>
    <property type="nucleotide sequence ID" value="NM_001146050.1"/>
</dbReference>
<dbReference type="RefSeq" id="NP_001139524.1">
    <molecule id="Q9Z2G9-1"/>
    <property type="nucleotide sequence ID" value="NM_001146052.1"/>
</dbReference>
<dbReference type="RefSeq" id="NP_001139525.1">
    <molecule id="Q9Z2G9-1"/>
    <property type="nucleotide sequence ID" value="NM_001146053.1"/>
</dbReference>
<dbReference type="PDB" id="2FMU">
    <property type="method" value="X-ray"/>
    <property type="resolution" value="2.30 A"/>
    <property type="chains" value="A=7-242"/>
</dbReference>
<dbReference type="PDBsum" id="2FMU"/>
<dbReference type="SMR" id="Q9Z2G9"/>
<dbReference type="BioGRID" id="207309">
    <property type="interactions" value="2"/>
</dbReference>
<dbReference type="FunCoup" id="Q9Z2G9">
    <property type="interactions" value="797"/>
</dbReference>
<dbReference type="STRING" id="10090.ENSMUSP00000146858"/>
<dbReference type="GlyGen" id="Q9Z2G9">
    <property type="glycosylation" value="1 site, 1 O-linked glycan (1 site)"/>
</dbReference>
<dbReference type="iPTMnet" id="Q9Z2G9"/>
<dbReference type="PhosphoSitePlus" id="Q9Z2G9"/>
<dbReference type="SwissPalm" id="Q9Z2G9"/>
<dbReference type="jPOST" id="Q9Z2G9"/>
<dbReference type="PaxDb" id="10090-ENSMUSP00000082374"/>
<dbReference type="PeptideAtlas" id="Q9Z2G9"/>
<dbReference type="ProteomicsDB" id="273197">
    <molecule id="Q9Z2G9-1"/>
</dbReference>
<dbReference type="ProteomicsDB" id="273198">
    <molecule id="Q9Z2G9-2"/>
</dbReference>
<dbReference type="Antibodypedia" id="1770">
    <property type="antibodies" value="279 antibodies from 32 providers"/>
</dbReference>
<dbReference type="DNASU" id="53415"/>
<dbReference type="Ensembl" id="ENSMUST00000085272.7">
    <molecule id="Q9Z2G9-1"/>
    <property type="protein sequence ID" value="ENSMUSP00000082374.6"/>
    <property type="gene ID" value="ENSMUSG00000039745.9"/>
</dbReference>
<dbReference type="GeneID" id="53415"/>
<dbReference type="KEGG" id="mmu:53415"/>
<dbReference type="UCSC" id="uc009hbo.2">
    <molecule id="Q9Z2G9-2"/>
    <property type="organism name" value="mouse"/>
</dbReference>
<dbReference type="UCSC" id="uc009hbq.2">
    <molecule id="Q9Z2G9-1"/>
    <property type="organism name" value="mouse"/>
</dbReference>
<dbReference type="AGR" id="MGI:1859271"/>
<dbReference type="CTD" id="10553"/>
<dbReference type="MGI" id="MGI:1859271">
    <property type="gene designation" value="Htatip2"/>
</dbReference>
<dbReference type="VEuPathDB" id="HostDB:ENSMUSG00000039745"/>
<dbReference type="eggNOG" id="KOG4039">
    <property type="taxonomic scope" value="Eukaryota"/>
</dbReference>
<dbReference type="GeneTree" id="ENSGT00390000008184"/>
<dbReference type="HOGENOM" id="CLU_071330_2_2_1"/>
<dbReference type="InParanoid" id="Q9Z2G9"/>
<dbReference type="OrthoDB" id="430436at2759"/>
<dbReference type="PhylomeDB" id="Q9Z2G9"/>
<dbReference type="TreeFam" id="TF312849"/>
<dbReference type="BioGRID-ORCS" id="53415">
    <property type="hits" value="3 hits in 77 CRISPR screens"/>
</dbReference>
<dbReference type="ChiTaRS" id="Htatip2">
    <property type="organism name" value="mouse"/>
</dbReference>
<dbReference type="EvolutionaryTrace" id="Q9Z2G9"/>
<dbReference type="PRO" id="PR:Q9Z2G9"/>
<dbReference type="Proteomes" id="UP000000589">
    <property type="component" value="Chromosome 7"/>
</dbReference>
<dbReference type="RNAct" id="Q9Z2G9">
    <property type="molecule type" value="protein"/>
</dbReference>
<dbReference type="Bgee" id="ENSMUSG00000039745">
    <property type="expression patterns" value="Expressed in urinary bladder urothelium and 213 other cell types or tissues"/>
</dbReference>
<dbReference type="ExpressionAtlas" id="Q9Z2G9">
    <property type="expression patterns" value="baseline and differential"/>
</dbReference>
<dbReference type="GO" id="GO:0005737">
    <property type="term" value="C:cytoplasm"/>
    <property type="evidence" value="ECO:0000250"/>
    <property type="project" value="UniProtKB"/>
</dbReference>
<dbReference type="GO" id="GO:0005635">
    <property type="term" value="C:nuclear envelope"/>
    <property type="evidence" value="ECO:0007669"/>
    <property type="project" value="UniProtKB-SubCell"/>
</dbReference>
<dbReference type="GO" id="GO:0051287">
    <property type="term" value="F:NAD binding"/>
    <property type="evidence" value="ECO:0007669"/>
    <property type="project" value="InterPro"/>
</dbReference>
<dbReference type="GO" id="GO:0016620">
    <property type="term" value="F:oxidoreductase activity, acting on the aldehyde or oxo group of donors, NAD or NADP as acceptor"/>
    <property type="evidence" value="ECO:0007669"/>
    <property type="project" value="InterPro"/>
</dbReference>
<dbReference type="GO" id="GO:0004674">
    <property type="term" value="F:protein serine/threonine kinase activity"/>
    <property type="evidence" value="ECO:0000266"/>
    <property type="project" value="MGI"/>
</dbReference>
<dbReference type="GO" id="GO:1901607">
    <property type="term" value="P:alpha-amino acid biosynthetic process"/>
    <property type="evidence" value="ECO:0007669"/>
    <property type="project" value="UniProtKB-ARBA"/>
</dbReference>
<dbReference type="GO" id="GO:0001525">
    <property type="term" value="P:angiogenesis"/>
    <property type="evidence" value="ECO:0007669"/>
    <property type="project" value="UniProtKB-KW"/>
</dbReference>
<dbReference type="GO" id="GO:0006915">
    <property type="term" value="P:apoptotic process"/>
    <property type="evidence" value="ECO:0007669"/>
    <property type="project" value="UniProtKB-KW"/>
</dbReference>
<dbReference type="GO" id="GO:0030154">
    <property type="term" value="P:cell differentiation"/>
    <property type="evidence" value="ECO:0007669"/>
    <property type="project" value="UniProtKB-KW"/>
</dbReference>
<dbReference type="GO" id="GO:0043068">
    <property type="term" value="P:positive regulation of programmed cell death"/>
    <property type="evidence" value="ECO:0000266"/>
    <property type="project" value="MGI"/>
</dbReference>
<dbReference type="GO" id="GO:0045944">
    <property type="term" value="P:positive regulation of transcription by RNA polymerase II"/>
    <property type="evidence" value="ECO:0000266"/>
    <property type="project" value="MGI"/>
</dbReference>
<dbReference type="CDD" id="cd05250">
    <property type="entry name" value="CC3_like_SDR_a"/>
    <property type="match status" value="1"/>
</dbReference>
<dbReference type="FunFam" id="3.40.50.720:FF:000271">
    <property type="entry name" value="oxidoreductase HTATIP2 isoform X1"/>
    <property type="match status" value="1"/>
</dbReference>
<dbReference type="Gene3D" id="3.40.50.720">
    <property type="entry name" value="NAD(P)-binding Rossmann-like Domain"/>
    <property type="match status" value="1"/>
</dbReference>
<dbReference type="InterPro" id="IPR016040">
    <property type="entry name" value="NAD(P)-bd_dom"/>
</dbReference>
<dbReference type="InterPro" id="IPR036291">
    <property type="entry name" value="NAD(P)-bd_dom_sf"/>
</dbReference>
<dbReference type="InterPro" id="IPR000534">
    <property type="entry name" value="Semialdehyde_DH_NAD-bd"/>
</dbReference>
<dbReference type="PANTHER" id="PTHR14097">
    <property type="entry name" value="OXIDOREDUCTASE HTATIP2"/>
    <property type="match status" value="1"/>
</dbReference>
<dbReference type="PANTHER" id="PTHR14097:SF7">
    <property type="entry name" value="OXIDOREDUCTASE HTATIP2"/>
    <property type="match status" value="1"/>
</dbReference>
<dbReference type="Pfam" id="PF13460">
    <property type="entry name" value="NAD_binding_10"/>
    <property type="match status" value="1"/>
</dbReference>
<dbReference type="SMART" id="SM00859">
    <property type="entry name" value="Semialdhyde_dh"/>
    <property type="match status" value="1"/>
</dbReference>
<dbReference type="SUPFAM" id="SSF51735">
    <property type="entry name" value="NAD(P)-binding Rossmann-fold domains"/>
    <property type="match status" value="1"/>
</dbReference>
<reference evidence="7 8" key="1">
    <citation type="journal article" date="2003" name="Cancer Res.">
        <title>TIP30 deficiency increases susceptibility to tumorigenesis.</title>
        <authorList>
            <person name="Ito M."/>
            <person name="Jiang C."/>
            <person name="Krumm K."/>
            <person name="Zhang X."/>
            <person name="Pecha J."/>
            <person name="Zhao J."/>
            <person name="Guo Y."/>
            <person name="Roeder R.G."/>
            <person name="Xiao H."/>
        </authorList>
    </citation>
    <scope>NUCLEOTIDE SEQUENCE [MRNA] (ISOFORM 1)</scope>
    <scope>DISRUPTION PHENOTYPE</scope>
</reference>
<reference evidence="9" key="2">
    <citation type="submission" date="2002-09" db="EMBL/GenBank/DDBJ databases">
        <title>Genomic organization, chromosomal mapping, and expression analysis of the murine Prmt3 and Htatip2 genes.</title>
        <authorList>
            <person name="Hauser L.J."/>
            <person name="Webb L.S."/>
            <person name="Dhar M.S."/>
            <person name="Mural R.M."/>
            <person name="Larimer F.W."/>
            <person name="Johnson D.K."/>
        </authorList>
    </citation>
    <scope>NUCLEOTIDE SEQUENCE [GENOMIC DNA]</scope>
    <source>
        <strain evidence="9">129/SvJ</strain>
    </source>
</reference>
<reference key="3">
    <citation type="journal article" date="2005" name="Science">
        <title>The transcriptional landscape of the mammalian genome.</title>
        <authorList>
            <person name="Carninci P."/>
            <person name="Kasukawa T."/>
            <person name="Katayama S."/>
            <person name="Gough J."/>
            <person name="Frith M.C."/>
            <person name="Maeda N."/>
            <person name="Oyama R."/>
            <person name="Ravasi T."/>
            <person name="Lenhard B."/>
            <person name="Wells C."/>
            <person name="Kodzius R."/>
            <person name="Shimokawa K."/>
            <person name="Bajic V.B."/>
            <person name="Brenner S.E."/>
            <person name="Batalov S."/>
            <person name="Forrest A.R."/>
            <person name="Zavolan M."/>
            <person name="Davis M.J."/>
            <person name="Wilming L.G."/>
            <person name="Aidinis V."/>
            <person name="Allen J.E."/>
            <person name="Ambesi-Impiombato A."/>
            <person name="Apweiler R."/>
            <person name="Aturaliya R.N."/>
            <person name="Bailey T.L."/>
            <person name="Bansal M."/>
            <person name="Baxter L."/>
            <person name="Beisel K.W."/>
            <person name="Bersano T."/>
            <person name="Bono H."/>
            <person name="Chalk A.M."/>
            <person name="Chiu K.P."/>
            <person name="Choudhary V."/>
            <person name="Christoffels A."/>
            <person name="Clutterbuck D.R."/>
            <person name="Crowe M.L."/>
            <person name="Dalla E."/>
            <person name="Dalrymple B.P."/>
            <person name="de Bono B."/>
            <person name="Della Gatta G."/>
            <person name="di Bernardo D."/>
            <person name="Down T."/>
            <person name="Engstrom P."/>
            <person name="Fagiolini M."/>
            <person name="Faulkner G."/>
            <person name="Fletcher C.F."/>
            <person name="Fukushima T."/>
            <person name="Furuno M."/>
            <person name="Futaki S."/>
            <person name="Gariboldi M."/>
            <person name="Georgii-Hemming P."/>
            <person name="Gingeras T.R."/>
            <person name="Gojobori T."/>
            <person name="Green R.E."/>
            <person name="Gustincich S."/>
            <person name="Harbers M."/>
            <person name="Hayashi Y."/>
            <person name="Hensch T.K."/>
            <person name="Hirokawa N."/>
            <person name="Hill D."/>
            <person name="Huminiecki L."/>
            <person name="Iacono M."/>
            <person name="Ikeo K."/>
            <person name="Iwama A."/>
            <person name="Ishikawa T."/>
            <person name="Jakt M."/>
            <person name="Kanapin A."/>
            <person name="Katoh M."/>
            <person name="Kawasawa Y."/>
            <person name="Kelso J."/>
            <person name="Kitamura H."/>
            <person name="Kitano H."/>
            <person name="Kollias G."/>
            <person name="Krishnan S.P."/>
            <person name="Kruger A."/>
            <person name="Kummerfeld S.K."/>
            <person name="Kurochkin I.V."/>
            <person name="Lareau L.F."/>
            <person name="Lazarevic D."/>
            <person name="Lipovich L."/>
            <person name="Liu J."/>
            <person name="Liuni S."/>
            <person name="McWilliam S."/>
            <person name="Madan Babu M."/>
            <person name="Madera M."/>
            <person name="Marchionni L."/>
            <person name="Matsuda H."/>
            <person name="Matsuzawa S."/>
            <person name="Miki H."/>
            <person name="Mignone F."/>
            <person name="Miyake S."/>
            <person name="Morris K."/>
            <person name="Mottagui-Tabar S."/>
            <person name="Mulder N."/>
            <person name="Nakano N."/>
            <person name="Nakauchi H."/>
            <person name="Ng P."/>
            <person name="Nilsson R."/>
            <person name="Nishiguchi S."/>
            <person name="Nishikawa S."/>
            <person name="Nori F."/>
            <person name="Ohara O."/>
            <person name="Okazaki Y."/>
            <person name="Orlando V."/>
            <person name="Pang K.C."/>
            <person name="Pavan W.J."/>
            <person name="Pavesi G."/>
            <person name="Pesole G."/>
            <person name="Petrovsky N."/>
            <person name="Piazza S."/>
            <person name="Reed J."/>
            <person name="Reid J.F."/>
            <person name="Ring B.Z."/>
            <person name="Ringwald M."/>
            <person name="Rost B."/>
            <person name="Ruan Y."/>
            <person name="Salzberg S.L."/>
            <person name="Sandelin A."/>
            <person name="Schneider C."/>
            <person name="Schoenbach C."/>
            <person name="Sekiguchi K."/>
            <person name="Semple C.A."/>
            <person name="Seno S."/>
            <person name="Sessa L."/>
            <person name="Sheng Y."/>
            <person name="Shibata Y."/>
            <person name="Shimada H."/>
            <person name="Shimada K."/>
            <person name="Silva D."/>
            <person name="Sinclair B."/>
            <person name="Sperling S."/>
            <person name="Stupka E."/>
            <person name="Sugiura K."/>
            <person name="Sultana R."/>
            <person name="Takenaka Y."/>
            <person name="Taki K."/>
            <person name="Tammoja K."/>
            <person name="Tan S.L."/>
            <person name="Tang S."/>
            <person name="Taylor M.S."/>
            <person name="Tegner J."/>
            <person name="Teichmann S.A."/>
            <person name="Ueda H.R."/>
            <person name="van Nimwegen E."/>
            <person name="Verardo R."/>
            <person name="Wei C.L."/>
            <person name="Yagi K."/>
            <person name="Yamanishi H."/>
            <person name="Zabarovsky E."/>
            <person name="Zhu S."/>
            <person name="Zimmer A."/>
            <person name="Hide W."/>
            <person name="Bult C."/>
            <person name="Grimmond S.M."/>
            <person name="Teasdale R.D."/>
            <person name="Liu E.T."/>
            <person name="Brusic V."/>
            <person name="Quackenbush J."/>
            <person name="Wahlestedt C."/>
            <person name="Mattick J.S."/>
            <person name="Hume D.A."/>
            <person name="Kai C."/>
            <person name="Sasaki D."/>
            <person name="Tomaru Y."/>
            <person name="Fukuda S."/>
            <person name="Kanamori-Katayama M."/>
            <person name="Suzuki M."/>
            <person name="Aoki J."/>
            <person name="Arakawa T."/>
            <person name="Iida J."/>
            <person name="Imamura K."/>
            <person name="Itoh M."/>
            <person name="Kato T."/>
            <person name="Kawaji H."/>
            <person name="Kawagashira N."/>
            <person name="Kawashima T."/>
            <person name="Kojima M."/>
            <person name="Kondo S."/>
            <person name="Konno H."/>
            <person name="Nakano K."/>
            <person name="Ninomiya N."/>
            <person name="Nishio T."/>
            <person name="Okada M."/>
            <person name="Plessy C."/>
            <person name="Shibata K."/>
            <person name="Shiraki T."/>
            <person name="Suzuki S."/>
            <person name="Tagami M."/>
            <person name="Waki K."/>
            <person name="Watahiki A."/>
            <person name="Okamura-Oho Y."/>
            <person name="Suzuki H."/>
            <person name="Kawai J."/>
            <person name="Hayashizaki Y."/>
        </authorList>
    </citation>
    <scope>NUCLEOTIDE SEQUENCE [LARGE SCALE MRNA] (ISOFORMS 1 AND 2)</scope>
    <source>
        <strain>C57BL/6J</strain>
        <tissue>Lung</tissue>
        <tissue>Stomach</tissue>
        <tissue>Testis</tissue>
    </source>
</reference>
<reference key="4">
    <citation type="journal article" date="2009" name="PLoS Biol.">
        <title>Lineage-specific biology revealed by a finished genome assembly of the mouse.</title>
        <authorList>
            <person name="Church D.M."/>
            <person name="Goodstadt L."/>
            <person name="Hillier L.W."/>
            <person name="Zody M.C."/>
            <person name="Goldstein S."/>
            <person name="She X."/>
            <person name="Bult C.J."/>
            <person name="Agarwala R."/>
            <person name="Cherry J.L."/>
            <person name="DiCuccio M."/>
            <person name="Hlavina W."/>
            <person name="Kapustin Y."/>
            <person name="Meric P."/>
            <person name="Maglott D."/>
            <person name="Birtle Z."/>
            <person name="Marques A.C."/>
            <person name="Graves T."/>
            <person name="Zhou S."/>
            <person name="Teague B."/>
            <person name="Potamousis K."/>
            <person name="Churas C."/>
            <person name="Place M."/>
            <person name="Herschleb J."/>
            <person name="Runnheim R."/>
            <person name="Forrest D."/>
            <person name="Amos-Landgraf J."/>
            <person name="Schwartz D.C."/>
            <person name="Cheng Z."/>
            <person name="Lindblad-Toh K."/>
            <person name="Eichler E.E."/>
            <person name="Ponting C.P."/>
        </authorList>
    </citation>
    <scope>NUCLEOTIDE SEQUENCE [LARGE SCALE GENOMIC DNA]</scope>
    <source>
        <strain>C57BL/6J</strain>
    </source>
</reference>
<reference evidence="9" key="5">
    <citation type="submission" date="2005-07" db="EMBL/GenBank/DDBJ databases">
        <authorList>
            <person name="Mural R.J."/>
            <person name="Adams M.D."/>
            <person name="Myers E.W."/>
            <person name="Smith H.O."/>
            <person name="Venter J.C."/>
        </authorList>
    </citation>
    <scope>NUCLEOTIDE SEQUENCE [LARGE SCALE GENOMIC DNA]</scope>
</reference>
<reference key="6">
    <citation type="journal article" date="2004" name="Genome Res.">
        <title>The status, quality, and expansion of the NIH full-length cDNA project: the Mammalian Gene Collection (MGC).</title>
        <authorList>
            <consortium name="The MGC Project Team"/>
        </authorList>
    </citation>
    <scope>NUCLEOTIDE SEQUENCE [LARGE SCALE MRNA]</scope>
    <source>
        <strain>Czech II</strain>
        <strain>FVB/N</strain>
        <tissue>Mammary tumor</tissue>
    </source>
</reference>
<reference key="7">
    <citation type="journal article" date="2010" name="Cell">
        <title>A tissue-specific atlas of mouse protein phosphorylation and expression.</title>
        <authorList>
            <person name="Huttlin E.L."/>
            <person name="Jedrychowski M.P."/>
            <person name="Elias J.E."/>
            <person name="Goswami T."/>
            <person name="Rad R."/>
            <person name="Beausoleil S.A."/>
            <person name="Villen J."/>
            <person name="Haas W."/>
            <person name="Sowa M.E."/>
            <person name="Gygi S.P."/>
        </authorList>
    </citation>
    <scope>IDENTIFICATION BY MASS SPECTROMETRY [LARGE SCALE ANALYSIS]</scope>
    <source>
        <tissue>Brown adipose tissue</tissue>
        <tissue>Heart</tissue>
        <tissue>Liver</tissue>
        <tissue>Lung</tissue>
        <tissue>Spleen</tissue>
        <tissue>Testis</tissue>
    </source>
</reference>
<reference key="8">
    <citation type="journal article" date="2019" name="EMBO Mol. Med.">
        <title>TIP30 counteracts cardiac hypertrophy and failure by inhibiting translational elongation.</title>
        <authorList>
            <person name="Grund A."/>
            <person name="Szaroszyk M."/>
            <person name="Korf-Klingebiel M."/>
            <person name="Malek Mohammadi M."/>
            <person name="Trogisch F.A."/>
            <person name="Schrameck U."/>
            <person name="Gigina A."/>
            <person name="Tiedje C."/>
            <person name="Gaestel M."/>
            <person name="Kraft T."/>
            <person name="Hegermann J."/>
            <person name="Batkai S."/>
            <person name="Thum T."/>
            <person name="Perrot A."/>
            <person name="Remedios C.D."/>
            <person name="Riechert E."/>
            <person name="Voelkers M."/>
            <person name="Doroudgar S."/>
            <person name="Jungmann A."/>
            <person name="Bauer R."/>
            <person name="Yin X."/>
            <person name="Mayr M."/>
            <person name="Wollert K.C."/>
            <person name="Pich A."/>
            <person name="Xiao H."/>
            <person name="Katus H.A."/>
            <person name="Bauersachs J."/>
            <person name="Mueller O.J."/>
            <person name="Heineke J."/>
        </authorList>
    </citation>
    <scope>FUNCTION</scope>
    <scope>DISRUPTION PHENOTYPE</scope>
</reference>
<reference evidence="9" key="9">
    <citation type="submission" date="2006-02" db="PDB data bank">
        <title>Crystal structure of Tat-interacting protein 30 kDa (HIV-1 Tat-interactive protein 2, 30 kDa homolog) (human) (16924205) from Mus musculus at 2.30 A resolution.</title>
        <authorList>
            <consortium name="Joint center for structural genomics (JCSG)"/>
        </authorList>
    </citation>
    <scope>X-RAY CRYSTALLOGRAPHY (2.3 ANGSTROMS) OF 7-242</scope>
</reference>
<organism>
    <name type="scientific">Mus musculus</name>
    <name type="common">Mouse</name>
    <dbReference type="NCBI Taxonomy" id="10090"/>
    <lineage>
        <taxon>Eukaryota</taxon>
        <taxon>Metazoa</taxon>
        <taxon>Chordata</taxon>
        <taxon>Craniata</taxon>
        <taxon>Vertebrata</taxon>
        <taxon>Euteleostomi</taxon>
        <taxon>Mammalia</taxon>
        <taxon>Eutheria</taxon>
        <taxon>Euarchontoglires</taxon>
        <taxon>Glires</taxon>
        <taxon>Rodentia</taxon>
        <taxon>Myomorpha</taxon>
        <taxon>Muroidea</taxon>
        <taxon>Muridae</taxon>
        <taxon>Murinae</taxon>
        <taxon>Mus</taxon>
        <taxon>Mus</taxon>
    </lineage>
</organism>
<protein>
    <recommendedName>
        <fullName evidence="7">Protein HTATIP2</fullName>
    </recommendedName>
</protein>
<proteinExistence type="evidence at protein level"/>
<accession>Q9Z2G9</accession>
<accession>Q810Y5</accession>
<accession>Q99KN6</accession>
<accession>Q9D5F8</accession>
<accession>Q9D804</accession>
<sequence>MADKEALPKLREDFKMQNKSVFILGASGETGKVLLKEILGQNLFSKVTLIGRRKLTFEEEAYKNVNQEVVDFEKLDVYASAFQGHDVGFCCLGTTRSKAGAEGFVRVDRDYVLKSAELAKAGGCKHFNLLSSRGADKSSSFLYLQVKGEVEAKVEELKFDRLSVFRPGVLLCDRQESRPGEWLARKFFGSLPDSWASGYAVPVVTVVRAMLNNLVSPSSGQMELLENKAILHLGKDRDVPKL</sequence>
<evidence type="ECO:0000250" key="1">
    <source>
        <dbReference type="UniProtKB" id="B0BNF8"/>
    </source>
</evidence>
<evidence type="ECO:0000250" key="2">
    <source>
        <dbReference type="UniProtKB" id="Q9BUP3"/>
    </source>
</evidence>
<evidence type="ECO:0000269" key="3">
    <source>
    </source>
</evidence>
<evidence type="ECO:0000269" key="4">
    <source>
    </source>
</evidence>
<evidence type="ECO:0000303" key="5">
    <source>
    </source>
</evidence>
<evidence type="ECO:0000303" key="6">
    <source>
    </source>
</evidence>
<evidence type="ECO:0000305" key="7"/>
<evidence type="ECO:0000312" key="8">
    <source>
        <dbReference type="EMBL" id="AAC69617.1"/>
    </source>
</evidence>
<evidence type="ECO:0000312" key="9">
    <source>
        <dbReference type="EMBL" id="AAN84531.1"/>
    </source>
</evidence>
<evidence type="ECO:0000312" key="10">
    <source>
        <dbReference type="MGI" id="MGI:1859271"/>
    </source>
</evidence>
<evidence type="ECO:0007829" key="11">
    <source>
        <dbReference type="PDB" id="2FMU"/>
    </source>
</evidence>
<comment type="function">
    <text evidence="2 4">Represses translation by preventing reactivation of elongation factor eEF1A (PubMed:31468715). May also inhibit nuclear import by competing with nuclear import substrates for binding to a subset of nuclear transport receptors (By similarity). Has additionally been proposed to act as a redox sensor involved in cellular oxidative stress surveillance (By similarity).</text>
</comment>
<comment type="subunit">
    <text evidence="1 2">Monomer. Forms homodimers during oxidative stress (By similarity). Interacts (via N-terminus) with elongation factor EEF1A1 (via middle-region); the interaction is direct and competes with EEF1A1 binding to guanyl-nucleotide exchange factor EEF1B2, thereby inhibiting GDP for GTP exchange and reactivation of EEF1A1 (By similarity). Interacts with nuclear transport receptors XPO4, IPO5/RANBP5, IPO7, IPO9 and KPNB1 as well as GCN1L1/GCN1 and LRPPRC probably through their HEAT repeats. Binds NCOA5/CIA (By similarity).</text>
</comment>
<comment type="subcellular location">
    <subcellularLocation>
        <location evidence="2">Cytoplasm</location>
    </subcellularLocation>
</comment>
<comment type="alternative products">
    <event type="alternative splicing"/>
    <isoform>
        <id>Q9Z2G9-1</id>
        <name evidence="3">1</name>
        <name evidence="5">TIP30</name>
        <name evidence="5">CC3</name>
        <sequence type="displayed"/>
    </isoform>
    <isoform>
        <id>Q9Z2G9-2</id>
        <name evidence="7">2</name>
        <sequence type="described" ref="VSP_051866 VSP_051867"/>
    </isoform>
</comment>
<comment type="disruption phenotype">
    <text evidence="3 4">Mice are haploinsufficient for tumor suppression. 50% develop tumors within their second year. 30% of the tumors are hepatocellular carcinomas (PubMed:14695192). Mice develop more cardiac hypertrophy and cardiac dilation following transverse aortic constriction (TAC) surgery (PubMed:31468715).</text>
</comment>
<keyword id="KW-0002">3D-structure</keyword>
<keyword id="KW-0007">Acetylation</keyword>
<keyword id="KW-0025">Alternative splicing</keyword>
<keyword id="KW-0963">Cytoplasm</keyword>
<keyword id="KW-1015">Disulfide bond</keyword>
<keyword id="KW-0521">NADP</keyword>
<keyword id="KW-1185">Reference proteome</keyword>
<keyword id="KW-0810">Translation regulation</keyword>
<keyword id="KW-0043">Tumor suppressor</keyword>
<feature type="initiator methionine" description="Removed" evidence="2">
    <location>
        <position position="1"/>
    </location>
</feature>
<feature type="chain" id="PRO_0000072545" description="Protein HTATIP2">
    <location>
        <begin position="2"/>
        <end position="242"/>
    </location>
</feature>
<feature type="region of interest" description="Required for interaction with elongation factor EEF1A1" evidence="1">
    <location>
        <begin position="2"/>
        <end position="25"/>
    </location>
</feature>
<feature type="active site" description="Proton acceptor" evidence="2">
    <location>
        <position position="143"/>
    </location>
</feature>
<feature type="active site" evidence="2">
    <location>
        <position position="147"/>
    </location>
</feature>
<feature type="binding site" evidence="2">
    <location>
        <position position="27"/>
    </location>
    <ligand>
        <name>NADPH</name>
        <dbReference type="ChEBI" id="CHEBI:57783"/>
    </ligand>
</feature>
<feature type="binding site" evidence="2">
    <location>
        <position position="28"/>
    </location>
    <ligand>
        <name>NADPH</name>
        <dbReference type="ChEBI" id="CHEBI:57783"/>
    </ligand>
</feature>
<feature type="binding site" evidence="2">
    <location>
        <position position="29"/>
    </location>
    <ligand>
        <name>NADPH</name>
        <dbReference type="ChEBI" id="CHEBI:57783"/>
    </ligand>
</feature>
<feature type="binding site" evidence="2">
    <location>
        <position position="30"/>
    </location>
    <ligand>
        <name>NADPH</name>
        <dbReference type="ChEBI" id="CHEBI:57783"/>
    </ligand>
</feature>
<feature type="binding site" evidence="2">
    <location>
        <position position="52"/>
    </location>
    <ligand>
        <name>NADPH</name>
        <dbReference type="ChEBI" id="CHEBI:57783"/>
    </ligand>
</feature>
<feature type="binding site" evidence="2">
    <location>
        <position position="53"/>
    </location>
    <ligand>
        <name>NADPH</name>
        <dbReference type="ChEBI" id="CHEBI:57783"/>
    </ligand>
</feature>
<feature type="binding site" evidence="2">
    <location>
        <position position="92"/>
    </location>
    <ligand>
        <name>NADPH</name>
        <dbReference type="ChEBI" id="CHEBI:57783"/>
    </ligand>
</feature>
<feature type="binding site" evidence="2">
    <location>
        <position position="93"/>
    </location>
    <ligand>
        <name>NADPH</name>
        <dbReference type="ChEBI" id="CHEBI:57783"/>
    </ligand>
</feature>
<feature type="binding site" evidence="2">
    <location>
        <position position="143"/>
    </location>
    <ligand>
        <name>NADPH</name>
        <dbReference type="ChEBI" id="CHEBI:57783"/>
    </ligand>
</feature>
<feature type="binding site" evidence="2">
    <location>
        <position position="147"/>
    </location>
    <ligand>
        <name>NADPH</name>
        <dbReference type="ChEBI" id="CHEBI:57783"/>
    </ligand>
</feature>
<feature type="binding site" evidence="2">
    <location>
        <position position="170"/>
    </location>
    <ligand>
        <name>NADPH</name>
        <dbReference type="ChEBI" id="CHEBI:57783"/>
    </ligand>
</feature>
<feature type="binding site" evidence="2">
    <location>
        <position position="178"/>
    </location>
    <ligand>
        <name>NADPH</name>
        <dbReference type="ChEBI" id="CHEBI:57783"/>
    </ligand>
</feature>
<feature type="modified residue" description="N-acetylalanine" evidence="2">
    <location>
        <position position="2"/>
    </location>
</feature>
<feature type="disulfide bond" description="Interchain; during oxidative stress" evidence="2">
    <location>
        <position position="172"/>
    </location>
</feature>
<feature type="splice variant" id="VSP_051866" description="In isoform 2." evidence="6">
    <original>EGFV</original>
    <variation>VSKK</variation>
    <location>
        <begin position="102"/>
        <end position="105"/>
    </location>
</feature>
<feature type="splice variant" id="VSP_051867" description="In isoform 2." evidence="6">
    <location>
        <begin position="106"/>
        <end position="242"/>
    </location>
</feature>
<feature type="sequence conflict" description="In Ref. 1; AAC69617." evidence="7" ref="1">
    <original>P</original>
    <variation>R</variation>
    <location>
        <position position="8"/>
    </location>
</feature>
<feature type="sequence conflict" description="In Ref. 3; BAB29825." evidence="7" ref="3">
    <original>L</original>
    <variation>P</variation>
    <location>
        <position position="10"/>
    </location>
</feature>
<feature type="sequence conflict" description="In Ref. 3; BAB29825." evidence="7" ref="3">
    <original>S</original>
    <variation>T</variation>
    <location>
        <position position="27"/>
    </location>
</feature>
<feature type="sequence conflict" description="In Ref. 1; AAC69617." evidence="7" ref="1">
    <original>L</original>
    <variation>V</variation>
    <location>
        <position position="39"/>
    </location>
</feature>
<feature type="sequence conflict" description="In Ref. 2; AAN84531." evidence="7" ref="2">
    <original>V</original>
    <variation>G</variation>
    <location>
        <position position="77"/>
    </location>
</feature>
<feature type="sequence conflict" description="In Ref. 1; AAC69617." evidence="7" ref="1">
    <original>N</original>
    <variation>S</variation>
    <location>
        <position position="213"/>
    </location>
</feature>
<feature type="sequence conflict" description="In Ref. 3; BAB25792." evidence="7" ref="3">
    <original>K</original>
    <variation>I</variation>
    <location>
        <position position="235"/>
    </location>
</feature>
<feature type="helix" evidence="11">
    <location>
        <begin position="7"/>
        <end position="16"/>
    </location>
</feature>
<feature type="strand" evidence="11">
    <location>
        <begin position="20"/>
        <end position="24"/>
    </location>
</feature>
<feature type="helix" evidence="11">
    <location>
        <begin position="29"/>
        <end position="41"/>
    </location>
</feature>
<feature type="strand" evidence="11">
    <location>
        <begin position="45"/>
        <end position="53"/>
    </location>
</feature>
<feature type="strand" evidence="11">
    <location>
        <begin position="66"/>
        <end position="69"/>
    </location>
</feature>
<feature type="helix" evidence="11">
    <location>
        <begin position="72"/>
        <end position="82"/>
    </location>
</feature>
<feature type="strand" evidence="11">
    <location>
        <begin position="86"/>
        <end position="90"/>
    </location>
</feature>
<feature type="helix" evidence="11">
    <location>
        <begin position="101"/>
        <end position="108"/>
    </location>
</feature>
<feature type="helix" evidence="11">
    <location>
        <begin position="110"/>
        <end position="121"/>
    </location>
</feature>
<feature type="strand" evidence="11">
    <location>
        <begin position="126"/>
        <end position="130"/>
    </location>
</feature>
<feature type="helix" evidence="11">
    <location>
        <begin position="142"/>
        <end position="156"/>
    </location>
</feature>
<feature type="strand" evidence="11">
    <location>
        <begin position="160"/>
        <end position="166"/>
    </location>
</feature>
<feature type="strand" evidence="11">
    <location>
        <begin position="168"/>
        <end position="171"/>
    </location>
</feature>
<feature type="helix" evidence="11">
    <location>
        <begin position="195"/>
        <end position="199"/>
    </location>
</feature>
<feature type="strand" evidence="11">
    <location>
        <begin position="200"/>
        <end position="202"/>
    </location>
</feature>
<feature type="helix" evidence="11">
    <location>
        <begin position="203"/>
        <end position="215"/>
    </location>
</feature>
<feature type="strand" evidence="11">
    <location>
        <begin position="219"/>
        <end position="226"/>
    </location>
</feature>
<feature type="helix" evidence="11">
    <location>
        <begin position="227"/>
        <end position="233"/>
    </location>
</feature>
<gene>
    <name evidence="10" type="primary">Htatip2</name>
    <name evidence="5" type="synonym">Cc3</name>
    <name evidence="5" type="synonym">Tip30</name>
</gene>